<reference key="1">
    <citation type="journal article" date="2006" name="Proc. Natl. Acad. Sci. U.S.A.">
        <title>Identification of genes subject to positive selection in uropathogenic strains of Escherichia coli: a comparative genomics approach.</title>
        <authorList>
            <person name="Chen S.L."/>
            <person name="Hung C.-S."/>
            <person name="Xu J."/>
            <person name="Reigstad C.S."/>
            <person name="Magrini V."/>
            <person name="Sabo A."/>
            <person name="Blasiar D."/>
            <person name="Bieri T."/>
            <person name="Meyer R.R."/>
            <person name="Ozersky P."/>
            <person name="Armstrong J.R."/>
            <person name="Fulton R.S."/>
            <person name="Latreille J.P."/>
            <person name="Spieth J."/>
            <person name="Hooton T.M."/>
            <person name="Mardis E.R."/>
            <person name="Hultgren S.J."/>
            <person name="Gordon J.I."/>
        </authorList>
    </citation>
    <scope>NUCLEOTIDE SEQUENCE [LARGE SCALE GENOMIC DNA]</scope>
    <source>
        <strain>UTI89 / UPEC</strain>
    </source>
</reference>
<gene>
    <name evidence="1" type="primary">lldD</name>
    <name type="ordered locus">UTI89_C4146</name>
</gene>
<name>LLDD_ECOUT</name>
<accession>Q1R4Z0</accession>
<proteinExistence type="inferred from homology"/>
<organism>
    <name type="scientific">Escherichia coli (strain UTI89 / UPEC)</name>
    <dbReference type="NCBI Taxonomy" id="364106"/>
    <lineage>
        <taxon>Bacteria</taxon>
        <taxon>Pseudomonadati</taxon>
        <taxon>Pseudomonadota</taxon>
        <taxon>Gammaproteobacteria</taxon>
        <taxon>Enterobacterales</taxon>
        <taxon>Enterobacteriaceae</taxon>
        <taxon>Escherichia</taxon>
    </lineage>
</organism>
<keyword id="KW-0997">Cell inner membrane</keyword>
<keyword id="KW-1003">Cell membrane</keyword>
<keyword id="KW-0285">Flavoprotein</keyword>
<keyword id="KW-0288">FMN</keyword>
<keyword id="KW-0472">Membrane</keyword>
<keyword id="KW-0560">Oxidoreductase</keyword>
<dbReference type="EC" id="1.1.-.-" evidence="1"/>
<dbReference type="EMBL" id="CP000243">
    <property type="protein sequence ID" value="ABE09574.1"/>
    <property type="molecule type" value="Genomic_DNA"/>
</dbReference>
<dbReference type="RefSeq" id="WP_000586970.1">
    <property type="nucleotide sequence ID" value="NZ_CP064825.1"/>
</dbReference>
<dbReference type="SMR" id="Q1R4Z0"/>
<dbReference type="KEGG" id="eci:UTI89_C4146"/>
<dbReference type="HOGENOM" id="CLU_020639_0_0_6"/>
<dbReference type="Proteomes" id="UP000001952">
    <property type="component" value="Chromosome"/>
</dbReference>
<dbReference type="GO" id="GO:0005886">
    <property type="term" value="C:plasma membrane"/>
    <property type="evidence" value="ECO:0007669"/>
    <property type="project" value="UniProtKB-SubCell"/>
</dbReference>
<dbReference type="GO" id="GO:0010181">
    <property type="term" value="F:FMN binding"/>
    <property type="evidence" value="ECO:0007669"/>
    <property type="project" value="InterPro"/>
</dbReference>
<dbReference type="GO" id="GO:0004459">
    <property type="term" value="F:L-lactate dehydrogenase activity"/>
    <property type="evidence" value="ECO:0007669"/>
    <property type="project" value="UniProtKB-UniRule"/>
</dbReference>
<dbReference type="GO" id="GO:0009060">
    <property type="term" value="P:aerobic respiration"/>
    <property type="evidence" value="ECO:0007669"/>
    <property type="project" value="TreeGrafter"/>
</dbReference>
<dbReference type="GO" id="GO:0006089">
    <property type="term" value="P:lactate metabolic process"/>
    <property type="evidence" value="ECO:0007669"/>
    <property type="project" value="UniProtKB-UniRule"/>
</dbReference>
<dbReference type="CDD" id="cd02809">
    <property type="entry name" value="alpha_hydroxyacid_oxid_FMN"/>
    <property type="match status" value="1"/>
</dbReference>
<dbReference type="FunFam" id="3.20.20.70:FF:000029">
    <property type="entry name" value="L-lactate dehydrogenase"/>
    <property type="match status" value="1"/>
</dbReference>
<dbReference type="Gene3D" id="3.20.20.70">
    <property type="entry name" value="Aldolase class I"/>
    <property type="match status" value="1"/>
</dbReference>
<dbReference type="HAMAP" id="MF_01559">
    <property type="entry name" value="L_lact_dehydr"/>
    <property type="match status" value="1"/>
</dbReference>
<dbReference type="InterPro" id="IPR013785">
    <property type="entry name" value="Aldolase_TIM"/>
</dbReference>
<dbReference type="InterPro" id="IPR012133">
    <property type="entry name" value="Alpha-hydoxy_acid_DH_FMN"/>
</dbReference>
<dbReference type="InterPro" id="IPR000262">
    <property type="entry name" value="FMN-dep_DH"/>
</dbReference>
<dbReference type="InterPro" id="IPR037396">
    <property type="entry name" value="FMN_HAD"/>
</dbReference>
<dbReference type="InterPro" id="IPR008259">
    <property type="entry name" value="FMN_hydac_DH_AS"/>
</dbReference>
<dbReference type="InterPro" id="IPR020920">
    <property type="entry name" value="LldD"/>
</dbReference>
<dbReference type="NCBIfam" id="NF033901">
    <property type="entry name" value="L_lactate_LldD"/>
    <property type="match status" value="1"/>
</dbReference>
<dbReference type="NCBIfam" id="NF008398">
    <property type="entry name" value="PRK11197.1"/>
    <property type="match status" value="1"/>
</dbReference>
<dbReference type="PANTHER" id="PTHR10578:SF85">
    <property type="entry name" value="L-LACTATE DEHYDROGENASE"/>
    <property type="match status" value="1"/>
</dbReference>
<dbReference type="PANTHER" id="PTHR10578">
    <property type="entry name" value="S -2-HYDROXY-ACID OXIDASE-RELATED"/>
    <property type="match status" value="1"/>
</dbReference>
<dbReference type="Pfam" id="PF01070">
    <property type="entry name" value="FMN_dh"/>
    <property type="match status" value="1"/>
</dbReference>
<dbReference type="PIRSF" id="PIRSF000138">
    <property type="entry name" value="Al-hdrx_acd_dh"/>
    <property type="match status" value="1"/>
</dbReference>
<dbReference type="SUPFAM" id="SSF51395">
    <property type="entry name" value="FMN-linked oxidoreductases"/>
    <property type="match status" value="1"/>
</dbReference>
<dbReference type="PROSITE" id="PS00557">
    <property type="entry name" value="FMN_HYDROXY_ACID_DH_1"/>
    <property type="match status" value="1"/>
</dbReference>
<dbReference type="PROSITE" id="PS51349">
    <property type="entry name" value="FMN_HYDROXY_ACID_DH_2"/>
    <property type="match status" value="1"/>
</dbReference>
<comment type="function">
    <text evidence="1">Catalyzes the conversion of L-lactate to pyruvate. Is coupled to the respiratory chain.</text>
</comment>
<comment type="catalytic activity">
    <reaction evidence="1">
        <text>(S)-lactate + A = pyruvate + AH2</text>
        <dbReference type="Rhea" id="RHEA:45816"/>
        <dbReference type="ChEBI" id="CHEBI:13193"/>
        <dbReference type="ChEBI" id="CHEBI:15361"/>
        <dbReference type="ChEBI" id="CHEBI:16651"/>
        <dbReference type="ChEBI" id="CHEBI:17499"/>
    </reaction>
</comment>
<comment type="cofactor">
    <cofactor evidence="1">
        <name>FMN</name>
        <dbReference type="ChEBI" id="CHEBI:58210"/>
    </cofactor>
</comment>
<comment type="subcellular location">
    <subcellularLocation>
        <location evidence="1">Cell inner membrane</location>
        <topology evidence="1">Peripheral membrane protein</topology>
    </subcellularLocation>
</comment>
<comment type="similarity">
    <text evidence="1">Belongs to the FMN-dependent alpha-hydroxy acid dehydrogenase family.</text>
</comment>
<protein>
    <recommendedName>
        <fullName evidence="1">L-lactate dehydrogenase</fullName>
        <ecNumber evidence="1">1.1.-.-</ecNumber>
    </recommendedName>
</protein>
<sequence>MIISAASDYRAAAQRILPPFLFHYMDGGAYSEYTLRRNVEDLSEVALRQRILKNMSDLSLETTLFNEKLSMPVALGPVGLCGMYARRGEVQAAKAADAHGIPFTLSTVSVCPIEEVAPAIKRPMWFQLYVLRDRGFMRNALERAKAAGCSTLVFTVDMPTPGARYRDAHSGMSGPNAAMRRYLQAVTHPQWAWDVGLNGRPHDLGNISAYLGKPTGLEDYIGWLANNFDPSISWKDLEWIRDFWDGPMVIKGILDPEDARDAVRFGADGIVVSNHGGRQLDGVLSSARALPAIADAVKGDIAILADSGIRNGLDVVRMIALGADTVLLGRAFLYALATAGQAGVANLLNLIEKEMKVAMTLTGAKSISEITQDSLVQVLGKELPAALAPMAKGNAA</sequence>
<feature type="chain" id="PRO_1000068983" description="L-lactate dehydrogenase">
    <location>
        <begin position="1"/>
        <end position="396"/>
    </location>
</feature>
<feature type="domain" description="FMN hydroxy acid dehydrogenase" evidence="1">
    <location>
        <begin position="1"/>
        <end position="380"/>
    </location>
</feature>
<feature type="active site" description="Proton acceptor" evidence="1">
    <location>
        <position position="275"/>
    </location>
</feature>
<feature type="binding site" evidence="1">
    <location>
        <position position="24"/>
    </location>
    <ligand>
        <name>substrate</name>
    </ligand>
</feature>
<feature type="binding site" evidence="1">
    <location>
        <position position="106"/>
    </location>
    <ligand>
        <name>FMN</name>
        <dbReference type="ChEBI" id="CHEBI:58210"/>
    </ligand>
</feature>
<feature type="binding site" evidence="1">
    <location>
        <position position="127"/>
    </location>
    <ligand>
        <name>FMN</name>
        <dbReference type="ChEBI" id="CHEBI:58210"/>
    </ligand>
</feature>
<feature type="binding site" evidence="1">
    <location>
        <position position="129"/>
    </location>
    <ligand>
        <name>substrate</name>
    </ligand>
</feature>
<feature type="binding site" evidence="1">
    <location>
        <position position="155"/>
    </location>
    <ligand>
        <name>FMN</name>
        <dbReference type="ChEBI" id="CHEBI:58210"/>
    </ligand>
</feature>
<feature type="binding site" evidence="1">
    <location>
        <position position="164"/>
    </location>
    <ligand>
        <name>substrate</name>
    </ligand>
</feature>
<feature type="binding site" evidence="1">
    <location>
        <position position="251"/>
    </location>
    <ligand>
        <name>FMN</name>
        <dbReference type="ChEBI" id="CHEBI:58210"/>
    </ligand>
</feature>
<feature type="binding site" evidence="1">
    <location>
        <position position="278"/>
    </location>
    <ligand>
        <name>substrate</name>
    </ligand>
</feature>
<feature type="binding site" evidence="1">
    <location>
        <begin position="306"/>
        <end position="330"/>
    </location>
    <ligand>
        <name>FMN</name>
        <dbReference type="ChEBI" id="CHEBI:58210"/>
    </ligand>
</feature>
<evidence type="ECO:0000255" key="1">
    <source>
        <dbReference type="HAMAP-Rule" id="MF_01559"/>
    </source>
</evidence>